<comment type="function">
    <text evidence="1">One of the primary rRNA binding proteins, this protein initially binds near the 5'-end of the 23S rRNA. It is important during the early stages of 50S assembly. It makes multiple contacts with different domains of the 23S rRNA in the assembled 50S subunit and ribosome.</text>
</comment>
<comment type="function">
    <text evidence="1">Forms part of the polypeptide exit tunnel.</text>
</comment>
<comment type="subunit">
    <text evidence="1">Part of the 50S ribosomal subunit.</text>
</comment>
<comment type="similarity">
    <text evidence="1">Belongs to the universal ribosomal protein uL4 family.</text>
</comment>
<name>RL4_ECOSM</name>
<accession>B1LHD3</accession>
<keyword id="KW-0687">Ribonucleoprotein</keyword>
<keyword id="KW-0689">Ribosomal protein</keyword>
<keyword id="KW-0694">RNA-binding</keyword>
<keyword id="KW-0699">rRNA-binding</keyword>
<protein>
    <recommendedName>
        <fullName evidence="1">Large ribosomal subunit protein uL4</fullName>
    </recommendedName>
    <alternativeName>
        <fullName evidence="3">50S ribosomal protein L4</fullName>
    </alternativeName>
</protein>
<reference key="1">
    <citation type="journal article" date="2008" name="J. Bacteriol.">
        <title>Insights into the environmental resistance gene pool from the genome sequence of the multidrug-resistant environmental isolate Escherichia coli SMS-3-5.</title>
        <authorList>
            <person name="Fricke W.F."/>
            <person name="Wright M.S."/>
            <person name="Lindell A.H."/>
            <person name="Harkins D.M."/>
            <person name="Baker-Austin C."/>
            <person name="Ravel J."/>
            <person name="Stepanauskas R."/>
        </authorList>
    </citation>
    <scope>NUCLEOTIDE SEQUENCE [LARGE SCALE GENOMIC DNA]</scope>
    <source>
        <strain>SMS-3-5 / SECEC</strain>
    </source>
</reference>
<dbReference type="EMBL" id="CP000970">
    <property type="protein sequence ID" value="ACB15534.1"/>
    <property type="molecule type" value="Genomic_DNA"/>
</dbReference>
<dbReference type="RefSeq" id="WP_000424395.1">
    <property type="nucleotide sequence ID" value="NC_010498.1"/>
</dbReference>
<dbReference type="SMR" id="B1LHD3"/>
<dbReference type="GeneID" id="97442859"/>
<dbReference type="KEGG" id="ecm:EcSMS35_3614"/>
<dbReference type="HOGENOM" id="CLU_041575_5_2_6"/>
<dbReference type="Proteomes" id="UP000007011">
    <property type="component" value="Chromosome"/>
</dbReference>
<dbReference type="GO" id="GO:1990904">
    <property type="term" value="C:ribonucleoprotein complex"/>
    <property type="evidence" value="ECO:0007669"/>
    <property type="project" value="UniProtKB-KW"/>
</dbReference>
<dbReference type="GO" id="GO:0005840">
    <property type="term" value="C:ribosome"/>
    <property type="evidence" value="ECO:0007669"/>
    <property type="project" value="UniProtKB-KW"/>
</dbReference>
<dbReference type="GO" id="GO:0019843">
    <property type="term" value="F:rRNA binding"/>
    <property type="evidence" value="ECO:0007669"/>
    <property type="project" value="UniProtKB-UniRule"/>
</dbReference>
<dbReference type="GO" id="GO:0003735">
    <property type="term" value="F:structural constituent of ribosome"/>
    <property type="evidence" value="ECO:0007669"/>
    <property type="project" value="InterPro"/>
</dbReference>
<dbReference type="GO" id="GO:0006412">
    <property type="term" value="P:translation"/>
    <property type="evidence" value="ECO:0007669"/>
    <property type="project" value="UniProtKB-UniRule"/>
</dbReference>
<dbReference type="FunFam" id="3.40.1370.10:FF:000001">
    <property type="entry name" value="50S ribosomal protein L4"/>
    <property type="match status" value="1"/>
</dbReference>
<dbReference type="Gene3D" id="3.40.1370.10">
    <property type="match status" value="1"/>
</dbReference>
<dbReference type="HAMAP" id="MF_01328_B">
    <property type="entry name" value="Ribosomal_uL4_B"/>
    <property type="match status" value="1"/>
</dbReference>
<dbReference type="InterPro" id="IPR002136">
    <property type="entry name" value="Ribosomal_uL4"/>
</dbReference>
<dbReference type="InterPro" id="IPR013005">
    <property type="entry name" value="Ribosomal_uL4-like"/>
</dbReference>
<dbReference type="InterPro" id="IPR023574">
    <property type="entry name" value="Ribosomal_uL4_dom_sf"/>
</dbReference>
<dbReference type="NCBIfam" id="TIGR03953">
    <property type="entry name" value="rplD_bact"/>
    <property type="match status" value="1"/>
</dbReference>
<dbReference type="PANTHER" id="PTHR10746">
    <property type="entry name" value="50S RIBOSOMAL PROTEIN L4"/>
    <property type="match status" value="1"/>
</dbReference>
<dbReference type="PANTHER" id="PTHR10746:SF6">
    <property type="entry name" value="LARGE RIBOSOMAL SUBUNIT PROTEIN UL4M"/>
    <property type="match status" value="1"/>
</dbReference>
<dbReference type="Pfam" id="PF00573">
    <property type="entry name" value="Ribosomal_L4"/>
    <property type="match status" value="1"/>
</dbReference>
<dbReference type="SUPFAM" id="SSF52166">
    <property type="entry name" value="Ribosomal protein L4"/>
    <property type="match status" value="1"/>
</dbReference>
<feature type="chain" id="PRO_1000142124" description="Large ribosomal subunit protein uL4">
    <location>
        <begin position="1"/>
        <end position="201"/>
    </location>
</feature>
<feature type="region of interest" description="Disordered" evidence="2">
    <location>
        <begin position="44"/>
        <end position="71"/>
    </location>
</feature>
<evidence type="ECO:0000255" key="1">
    <source>
        <dbReference type="HAMAP-Rule" id="MF_01328"/>
    </source>
</evidence>
<evidence type="ECO:0000256" key="2">
    <source>
        <dbReference type="SAM" id="MobiDB-lite"/>
    </source>
</evidence>
<evidence type="ECO:0000305" key="3"/>
<sequence length="201" mass="22087">MELVLKDAQSALTVSETTFGRDFNEALVHQVVVAYAAGARQGTRAQKTRAEVTGSGKKPWRQKGTGRARSGSIKSPIWRSGGVTFAARPQDHSQKVNKKMYRGALKSILSELVRQDRLIVVEKFSVEAPKTKLLAQKLKDMALEDVLIITGELDENLFLAARNLHKVDVRDATGIDPVSLIAFDKVVMTADAVKQVEEMLA</sequence>
<proteinExistence type="inferred from homology"/>
<organism>
    <name type="scientific">Escherichia coli (strain SMS-3-5 / SECEC)</name>
    <dbReference type="NCBI Taxonomy" id="439855"/>
    <lineage>
        <taxon>Bacteria</taxon>
        <taxon>Pseudomonadati</taxon>
        <taxon>Pseudomonadota</taxon>
        <taxon>Gammaproteobacteria</taxon>
        <taxon>Enterobacterales</taxon>
        <taxon>Enterobacteriaceae</taxon>
        <taxon>Escherichia</taxon>
    </lineage>
</organism>
<gene>
    <name evidence="1" type="primary">rplD</name>
    <name type="ordered locus">EcSMS35_3614</name>
</gene>